<evidence type="ECO:0000250" key="1">
    <source>
        <dbReference type="UniProtKB" id="Q8L9J7"/>
    </source>
</evidence>
<evidence type="ECO:0000255" key="2"/>
<evidence type="ECO:0000269" key="3">
    <source>
    </source>
</evidence>
<evidence type="ECO:0000269" key="4">
    <source>
    </source>
</evidence>
<evidence type="ECO:0000269" key="5">
    <source>
    </source>
</evidence>
<evidence type="ECO:0000269" key="6">
    <source>
    </source>
</evidence>
<evidence type="ECO:0000303" key="7">
    <source>
    </source>
</evidence>
<evidence type="ECO:0000303" key="8">
    <source>
    </source>
</evidence>
<evidence type="ECO:0000305" key="9"/>
<evidence type="ECO:0000312" key="10">
    <source>
        <dbReference type="EMBL" id="AEE83666.1"/>
    </source>
</evidence>
<evidence type="ECO:0000312" key="11">
    <source>
        <dbReference type="EMBL" id="CAB10371.1"/>
    </source>
</evidence>
<evidence type="ECO:0000312" key="12">
    <source>
        <dbReference type="EMBL" id="CAB78634.1"/>
    </source>
</evidence>
<comment type="function">
    <text evidence="4 6 8">Acts as a vacuolar hexose transporter (PubMed:25988582). Regulates fructose (Fru) homeostasis in leaves and roots by exporting/importing Fru through the tonoplast regarding metabolic demand (PubMed:23583552, PubMed:24381066).</text>
</comment>
<comment type="biophysicochemical properties">
    <kinetics>
        <KM evidence="6">25.6 mM for fructose</KM>
        <text evidence="6">Vmax with fructose as substrate is 479.8 pmol/min/ul of vacuole.</text>
    </kinetics>
</comment>
<comment type="subunit">
    <text evidence="5">Forms homooligomers and heterooligomers with SWEET1, SWEET2, SWEET3, SWEET4, SWEET6, SWEET7, SWEET8, SWEET9, SWEET11, SWEET12, SWEET13, SWEET15 and SWEET16.</text>
</comment>
<comment type="subcellular location">
    <subcellularLocation>
        <location evidence="4 6 8">Vacuole membrane</location>
        <topology evidence="1">Multi-pass membrane protein</topology>
    </subcellularLocation>
</comment>
<comment type="tissue specificity">
    <text evidence="4 6">Expressed in leaves at low levels, mostly in xylem and parenchyma (PubMed:23583552, PubMed:24381066). Highly expressed in the cortex of roots, predominantly in tips and mature regions, especially in tonoplasts. Also accumulates in cotyledons, stems, flowers, and siliques (PubMed:24381066).</text>
</comment>
<comment type="induction">
    <text evidence="3 4 6">Slightly induced by the fungal pathogen B.cinerea. Accumulates in response to nitrogen deficiency and cold stress. Expression follows a diurnal rhythm with a peak in the middle of the day (PubMed:23583552). Induced in roots by fructose (Fru) and darkness, thus triggering accumulation and release of vacuolar Fru, respectively (PubMed:24381066).</text>
</comment>
<comment type="disruption phenotype">
    <text evidence="4 6">High fructose levels in leaves, especially in vacuoles, due to impaired vacuolar fructose export (PubMed:23583552). Increased root sensitivity to high levels of fructose (PubMed:24381066).</text>
</comment>
<comment type="similarity">
    <text evidence="9">Belongs to the SWEET sugar transporter family.</text>
</comment>
<comment type="sequence caution" evidence="9">
    <conflict type="erroneous gene model prediction">
        <sequence resource="EMBL-CDS" id="CAB10371"/>
    </conflict>
</comment>
<comment type="sequence caution" evidence="9">
    <conflict type="erroneous gene model prediction">
        <sequence resource="EMBL-CDS" id="CAB78634"/>
    </conflict>
</comment>
<organism>
    <name type="scientific">Arabidopsis thaliana</name>
    <name type="common">Mouse-ear cress</name>
    <dbReference type="NCBI Taxonomy" id="3702"/>
    <lineage>
        <taxon>Eukaryota</taxon>
        <taxon>Viridiplantae</taxon>
        <taxon>Streptophyta</taxon>
        <taxon>Embryophyta</taxon>
        <taxon>Tracheophyta</taxon>
        <taxon>Spermatophyta</taxon>
        <taxon>Magnoliopsida</taxon>
        <taxon>eudicotyledons</taxon>
        <taxon>Gunneridae</taxon>
        <taxon>Pentapetalae</taxon>
        <taxon>rosids</taxon>
        <taxon>malvids</taxon>
        <taxon>Brassicales</taxon>
        <taxon>Brassicaceae</taxon>
        <taxon>Camelineae</taxon>
        <taxon>Arabidopsis</taxon>
    </lineage>
</organism>
<reference key="1">
    <citation type="journal article" date="1998" name="Nature">
        <title>Analysis of 1.9 Mb of contiguous sequence from chromosome 4 of Arabidopsis thaliana.</title>
        <authorList>
            <person name="Bevan M."/>
            <person name="Bancroft I."/>
            <person name="Bent E."/>
            <person name="Love K."/>
            <person name="Goodman H.M."/>
            <person name="Dean C."/>
            <person name="Bergkamp R."/>
            <person name="Dirkse W."/>
            <person name="van Staveren M."/>
            <person name="Stiekema W."/>
            <person name="Drost L."/>
            <person name="Ridley P."/>
            <person name="Hudson S.-A."/>
            <person name="Patel K."/>
            <person name="Murphy G."/>
            <person name="Piffanelli P."/>
            <person name="Wedler H."/>
            <person name="Wedler E."/>
            <person name="Wambutt R."/>
            <person name="Weitzenegger T."/>
            <person name="Pohl T."/>
            <person name="Terryn N."/>
            <person name="Gielen J."/>
            <person name="Villarroel R."/>
            <person name="De Clercq R."/>
            <person name="van Montagu M."/>
            <person name="Lecharny A."/>
            <person name="Aubourg S."/>
            <person name="Gy I."/>
            <person name="Kreis M."/>
            <person name="Lao N."/>
            <person name="Kavanagh T."/>
            <person name="Hempel S."/>
            <person name="Kotter P."/>
            <person name="Entian K.-D."/>
            <person name="Rieger M."/>
            <person name="Schaefer M."/>
            <person name="Funk B."/>
            <person name="Mueller-Auer S."/>
            <person name="Silvey M."/>
            <person name="James R."/>
            <person name="Monfort A."/>
            <person name="Pons A."/>
            <person name="Puigdomenech P."/>
            <person name="Douka A."/>
            <person name="Voukelatou E."/>
            <person name="Milioni D."/>
            <person name="Hatzopoulos P."/>
            <person name="Piravandi E."/>
            <person name="Obermaier B."/>
            <person name="Hilbert H."/>
            <person name="Duesterhoeft A."/>
            <person name="Moores T."/>
            <person name="Jones J.D.G."/>
            <person name="Eneva T."/>
            <person name="Palme K."/>
            <person name="Benes V."/>
            <person name="Rechmann S."/>
            <person name="Ansorge W."/>
            <person name="Cooke R."/>
            <person name="Berger C."/>
            <person name="Delseny M."/>
            <person name="Voet M."/>
            <person name="Volckaert G."/>
            <person name="Mewes H.-W."/>
            <person name="Klosterman S."/>
            <person name="Schueller C."/>
            <person name="Chalwatzis N."/>
        </authorList>
    </citation>
    <scope>NUCLEOTIDE SEQUENCE [LARGE SCALE GENOMIC DNA]</scope>
    <source>
        <strain>cv. Columbia</strain>
    </source>
</reference>
<reference key="2">
    <citation type="journal article" date="1999" name="Nature">
        <title>Sequence and analysis of chromosome 4 of the plant Arabidopsis thaliana.</title>
        <authorList>
            <person name="Mayer K.F.X."/>
            <person name="Schueller C."/>
            <person name="Wambutt R."/>
            <person name="Murphy G."/>
            <person name="Volckaert G."/>
            <person name="Pohl T."/>
            <person name="Duesterhoeft A."/>
            <person name="Stiekema W."/>
            <person name="Entian K.-D."/>
            <person name="Terryn N."/>
            <person name="Harris B."/>
            <person name="Ansorge W."/>
            <person name="Brandt P."/>
            <person name="Grivell L.A."/>
            <person name="Rieger M."/>
            <person name="Weichselgartner M."/>
            <person name="de Simone V."/>
            <person name="Obermaier B."/>
            <person name="Mache R."/>
            <person name="Mueller M."/>
            <person name="Kreis M."/>
            <person name="Delseny M."/>
            <person name="Puigdomenech P."/>
            <person name="Watson M."/>
            <person name="Schmidtheini T."/>
            <person name="Reichert B."/>
            <person name="Portetelle D."/>
            <person name="Perez-Alonso M."/>
            <person name="Boutry M."/>
            <person name="Bancroft I."/>
            <person name="Vos P."/>
            <person name="Hoheisel J."/>
            <person name="Zimmermann W."/>
            <person name="Wedler H."/>
            <person name="Ridley P."/>
            <person name="Langham S.-A."/>
            <person name="McCullagh B."/>
            <person name="Bilham L."/>
            <person name="Robben J."/>
            <person name="van der Schueren J."/>
            <person name="Grymonprez B."/>
            <person name="Chuang Y.-J."/>
            <person name="Vandenbussche F."/>
            <person name="Braeken M."/>
            <person name="Weltjens I."/>
            <person name="Voet M."/>
            <person name="Bastiaens I."/>
            <person name="Aert R."/>
            <person name="Defoor E."/>
            <person name="Weitzenegger T."/>
            <person name="Bothe G."/>
            <person name="Ramsperger U."/>
            <person name="Hilbert H."/>
            <person name="Braun M."/>
            <person name="Holzer E."/>
            <person name="Brandt A."/>
            <person name="Peters S."/>
            <person name="van Staveren M."/>
            <person name="Dirkse W."/>
            <person name="Mooijman P."/>
            <person name="Klein Lankhorst R."/>
            <person name="Rose M."/>
            <person name="Hauf J."/>
            <person name="Koetter P."/>
            <person name="Berneiser S."/>
            <person name="Hempel S."/>
            <person name="Feldpausch M."/>
            <person name="Lamberth S."/>
            <person name="Van den Daele H."/>
            <person name="De Keyser A."/>
            <person name="Buysshaert C."/>
            <person name="Gielen J."/>
            <person name="Villarroel R."/>
            <person name="De Clercq R."/>
            <person name="van Montagu M."/>
            <person name="Rogers J."/>
            <person name="Cronin A."/>
            <person name="Quail M.A."/>
            <person name="Bray-Allen S."/>
            <person name="Clark L."/>
            <person name="Doggett J."/>
            <person name="Hall S."/>
            <person name="Kay M."/>
            <person name="Lennard N."/>
            <person name="McLay K."/>
            <person name="Mayes R."/>
            <person name="Pettett A."/>
            <person name="Rajandream M.A."/>
            <person name="Lyne M."/>
            <person name="Benes V."/>
            <person name="Rechmann S."/>
            <person name="Borkova D."/>
            <person name="Bloecker H."/>
            <person name="Scharfe M."/>
            <person name="Grimm M."/>
            <person name="Loehnert T.-H."/>
            <person name="Dose S."/>
            <person name="de Haan M."/>
            <person name="Maarse A.C."/>
            <person name="Schaefer M."/>
            <person name="Mueller-Auer S."/>
            <person name="Gabel C."/>
            <person name="Fuchs M."/>
            <person name="Fartmann B."/>
            <person name="Granderath K."/>
            <person name="Dauner D."/>
            <person name="Herzl A."/>
            <person name="Neumann S."/>
            <person name="Argiriou A."/>
            <person name="Vitale D."/>
            <person name="Liguori R."/>
            <person name="Piravandi E."/>
            <person name="Massenet O."/>
            <person name="Quigley F."/>
            <person name="Clabauld G."/>
            <person name="Muendlein A."/>
            <person name="Felber R."/>
            <person name="Schnabl S."/>
            <person name="Hiller R."/>
            <person name="Schmidt W."/>
            <person name="Lecharny A."/>
            <person name="Aubourg S."/>
            <person name="Chefdor F."/>
            <person name="Cooke R."/>
            <person name="Berger C."/>
            <person name="Monfort A."/>
            <person name="Casacuberta E."/>
            <person name="Gibbons T."/>
            <person name="Weber N."/>
            <person name="Vandenbol M."/>
            <person name="Bargues M."/>
            <person name="Terol J."/>
            <person name="Torres A."/>
            <person name="Perez-Perez A."/>
            <person name="Purnelle B."/>
            <person name="Bent E."/>
            <person name="Johnson S."/>
            <person name="Tacon D."/>
            <person name="Jesse T."/>
            <person name="Heijnen L."/>
            <person name="Schwarz S."/>
            <person name="Scholler P."/>
            <person name="Heber S."/>
            <person name="Francs P."/>
            <person name="Bielke C."/>
            <person name="Frishman D."/>
            <person name="Haase D."/>
            <person name="Lemcke K."/>
            <person name="Mewes H.-W."/>
            <person name="Stocker S."/>
            <person name="Zaccaria P."/>
            <person name="Bevan M."/>
            <person name="Wilson R.K."/>
            <person name="de la Bastide M."/>
            <person name="Habermann K."/>
            <person name="Parnell L."/>
            <person name="Dedhia N."/>
            <person name="Gnoj L."/>
            <person name="Schutz K."/>
            <person name="Huang E."/>
            <person name="Spiegel L."/>
            <person name="Sekhon M."/>
            <person name="Murray J."/>
            <person name="Sheet P."/>
            <person name="Cordes M."/>
            <person name="Abu-Threideh J."/>
            <person name="Stoneking T."/>
            <person name="Kalicki J."/>
            <person name="Graves T."/>
            <person name="Harmon G."/>
            <person name="Edwards J."/>
            <person name="Latreille P."/>
            <person name="Courtney L."/>
            <person name="Cloud J."/>
            <person name="Abbott A."/>
            <person name="Scott K."/>
            <person name="Johnson D."/>
            <person name="Minx P."/>
            <person name="Bentley D."/>
            <person name="Fulton B."/>
            <person name="Miller N."/>
            <person name="Greco T."/>
            <person name="Kemp K."/>
            <person name="Kramer J."/>
            <person name="Fulton L."/>
            <person name="Mardis E."/>
            <person name="Dante M."/>
            <person name="Pepin K."/>
            <person name="Hillier L.W."/>
            <person name="Nelson J."/>
            <person name="Spieth J."/>
            <person name="Ryan E."/>
            <person name="Andrews S."/>
            <person name="Geisel C."/>
            <person name="Layman D."/>
            <person name="Du H."/>
            <person name="Ali J."/>
            <person name="Berghoff A."/>
            <person name="Jones K."/>
            <person name="Drone K."/>
            <person name="Cotton M."/>
            <person name="Joshu C."/>
            <person name="Antonoiu B."/>
            <person name="Zidanic M."/>
            <person name="Strong C."/>
            <person name="Sun H."/>
            <person name="Lamar B."/>
            <person name="Yordan C."/>
            <person name="Ma P."/>
            <person name="Zhong J."/>
            <person name="Preston R."/>
            <person name="Vil D."/>
            <person name="Shekher M."/>
            <person name="Matero A."/>
            <person name="Shah R."/>
            <person name="Swaby I.K."/>
            <person name="O'Shaughnessy A."/>
            <person name="Rodriguez M."/>
            <person name="Hoffman J."/>
            <person name="Till S."/>
            <person name="Granat S."/>
            <person name="Shohdy N."/>
            <person name="Hasegawa A."/>
            <person name="Hameed A."/>
            <person name="Lodhi M."/>
            <person name="Johnson A."/>
            <person name="Chen E."/>
            <person name="Marra M.A."/>
            <person name="Martienssen R."/>
            <person name="McCombie W.R."/>
        </authorList>
    </citation>
    <scope>NUCLEOTIDE SEQUENCE [LARGE SCALE GENOMIC DNA]</scope>
    <source>
        <strain>cv. Columbia</strain>
    </source>
</reference>
<reference key="3">
    <citation type="journal article" date="2017" name="Plant J.">
        <title>Araport11: a complete reannotation of the Arabidopsis thaliana reference genome.</title>
        <authorList>
            <person name="Cheng C.Y."/>
            <person name="Krishnakumar V."/>
            <person name="Chan A.P."/>
            <person name="Thibaud-Nissen F."/>
            <person name="Schobel S."/>
            <person name="Town C.D."/>
        </authorList>
    </citation>
    <scope>GENOME REANNOTATION</scope>
    <scope>SEQUENCE REVISION</scope>
    <source>
        <strain>cv. Columbia</strain>
    </source>
</reference>
<reference key="4">
    <citation type="journal article" date="2003" name="Science">
        <title>Empirical analysis of transcriptional activity in the Arabidopsis genome.</title>
        <authorList>
            <person name="Yamada K."/>
            <person name="Lim J."/>
            <person name="Dale J.M."/>
            <person name="Chen H."/>
            <person name="Shinn P."/>
            <person name="Palm C.J."/>
            <person name="Southwick A.M."/>
            <person name="Wu H.C."/>
            <person name="Kim C.J."/>
            <person name="Nguyen M."/>
            <person name="Pham P.K."/>
            <person name="Cheuk R.F."/>
            <person name="Karlin-Newmann G."/>
            <person name="Liu S.X."/>
            <person name="Lam B."/>
            <person name="Sakano H."/>
            <person name="Wu T."/>
            <person name="Yu G."/>
            <person name="Miranda M."/>
            <person name="Quach H.L."/>
            <person name="Tripp M."/>
            <person name="Chang C.H."/>
            <person name="Lee J.M."/>
            <person name="Toriumi M.J."/>
            <person name="Chan M.M."/>
            <person name="Tang C.C."/>
            <person name="Onodera C.S."/>
            <person name="Deng J.M."/>
            <person name="Akiyama K."/>
            <person name="Ansari Y."/>
            <person name="Arakawa T."/>
            <person name="Banh J."/>
            <person name="Banno F."/>
            <person name="Bowser L."/>
            <person name="Brooks S.Y."/>
            <person name="Carninci P."/>
            <person name="Chao Q."/>
            <person name="Choy N."/>
            <person name="Enju A."/>
            <person name="Goldsmith A.D."/>
            <person name="Gurjal M."/>
            <person name="Hansen N.F."/>
            <person name="Hayashizaki Y."/>
            <person name="Johnson-Hopson C."/>
            <person name="Hsuan V.W."/>
            <person name="Iida K."/>
            <person name="Karnes M."/>
            <person name="Khan S."/>
            <person name="Koesema E."/>
            <person name="Ishida J."/>
            <person name="Jiang P.X."/>
            <person name="Jones T."/>
            <person name="Kawai J."/>
            <person name="Kamiya A."/>
            <person name="Meyers C."/>
            <person name="Nakajima M."/>
            <person name="Narusaka M."/>
            <person name="Seki M."/>
            <person name="Sakurai T."/>
            <person name="Satou M."/>
            <person name="Tamse R."/>
            <person name="Vaysberg M."/>
            <person name="Wallender E.K."/>
            <person name="Wong C."/>
            <person name="Yamamura Y."/>
            <person name="Yuan S."/>
            <person name="Shinozaki K."/>
            <person name="Davis R.W."/>
            <person name="Theologis A."/>
            <person name="Ecker J.R."/>
        </authorList>
    </citation>
    <scope>NUCLEOTIDE SEQUENCE [LARGE SCALE MRNA]</scope>
    <source>
        <strain>cv. Columbia</strain>
    </source>
</reference>
<reference key="5">
    <citation type="journal article" date="2010" name="Nature">
        <title>Sugar transporters for intercellular exchange and nutrition of pathogens.</title>
        <authorList>
            <person name="Chen L.-Q."/>
            <person name="Hou B.-H."/>
            <person name="Lalonde S."/>
            <person name="Takanaga H."/>
            <person name="Hartung M.L."/>
            <person name="Qu X.-Q."/>
            <person name="Guo W.-J."/>
            <person name="Kim J.-G."/>
            <person name="Underwood W."/>
            <person name="Chaudhuri B."/>
            <person name="Chermak D."/>
            <person name="Antony G."/>
            <person name="White F.F."/>
            <person name="Somerville S.C."/>
            <person name="Mudgett M.B."/>
            <person name="Frommer W.B."/>
        </authorList>
    </citation>
    <scope>INDUCTION BY PATHOGENS</scope>
    <scope>GENE FAMILY</scope>
    <scope>NOMENCLATURE</scope>
    <source>
        <strain>cv. Columbia</strain>
    </source>
</reference>
<reference key="6">
    <citation type="journal article" date="2013" name="Curr. Biol.">
        <title>Leaf fructose content is controlled by the vacuolar transporter SWEET17 in Arabidopsis.</title>
        <authorList>
            <person name="Chardon F."/>
            <person name="Bedu M."/>
            <person name="Calenge F."/>
            <person name="Klemens P.A.W."/>
            <person name="Spinner L."/>
            <person name="Clement G."/>
            <person name="Chietera G."/>
            <person name="Leran S."/>
            <person name="Ferrand M."/>
            <person name="Lacombe B."/>
            <person name="Loudet O."/>
            <person name="Dinant S."/>
            <person name="Bellini C."/>
            <person name="Neuhaus H.E."/>
            <person name="Daniel-Vedele F."/>
            <person name="Krapp A."/>
        </authorList>
    </citation>
    <scope>FUNCTION</scope>
    <scope>DISRUPTION PHENOTYPE</scope>
    <scope>SUBCELLULAR LOCATION</scope>
    <scope>INDUCTION BY LIGHT; COLD AND NITROGEN DEFICIENCY</scope>
    <scope>TISSUE SPECIFICITY</scope>
    <source>
        <strain>cv. Columbia</strain>
    </source>
</reference>
<reference key="7">
    <citation type="journal article" date="2013" name="Proc. Natl. Acad. Sci. U.S.A.">
        <title>Functional role of oligomerization for bacterial and plant SWEET sugar transporter family.</title>
        <authorList>
            <person name="Xuan Y.H."/>
            <person name="Hu Y.B."/>
            <person name="Chen L.-Q."/>
            <person name="Sosso D."/>
            <person name="Ducat D.C."/>
            <person name="Hou B.-H."/>
            <person name="Frommer W.B."/>
        </authorList>
    </citation>
    <scope>SUBUNIT</scope>
    <scope>INTERACTION WITH SWEET1; SWEET2; SWEET3; SWEET4; SWEET6; SWEET7; SWEET8; SWEET9; SWEET11; SWEET12; SWEET13; SWEET15 AND SWEET16</scope>
</reference>
<reference key="8">
    <citation type="journal article" date="2014" name="Plant Physiol.">
        <title>SWEET17, a facilitative transporter, mediates fructose transport across the tonoplast of Arabidopsis roots and leaves.</title>
        <authorList>
            <person name="Guo W.-J."/>
            <person name="Nagy R."/>
            <person name="Chen H.-Y."/>
            <person name="Pfrunder S."/>
            <person name="Yu Y.-C."/>
            <person name="Santelia D."/>
            <person name="Frommer W.B."/>
            <person name="Martinoia E."/>
        </authorList>
    </citation>
    <scope>FUNCTION</scope>
    <scope>DISRUPTION PHENOTYPE</scope>
    <scope>TISSUE SPECIFICITY</scope>
    <scope>SUBCELLULAR LOCATION</scope>
    <scope>INDUCTION BY DARKNESS AND FRUCTOSE</scope>
    <scope>BIOPHYSICOCHEMICAL PROPERTIES</scope>
    <source>
        <strain>cv. Columbia</strain>
    </source>
</reference>
<reference key="9">
    <citation type="journal article" date="2015" name="Curr. Opin. Plant Biol.">
        <title>SWEETs, transporters for intracellular and intercellular sugar translocation.</title>
        <authorList>
            <person name="Eom J.-S."/>
            <person name="Chen L.-Q."/>
            <person name="Sosso D."/>
            <person name="Julius B.T."/>
            <person name="Lin I.W."/>
            <person name="Qu X.-Q."/>
            <person name="Braun D.M."/>
            <person name="Frommer W.B."/>
        </authorList>
    </citation>
    <scope>REVIEW</scope>
    <source>
        <strain>cv. Columbia</strain>
    </source>
</reference>
<name>SWT17_ARATH</name>
<dbReference type="EMBL" id="Z97339">
    <property type="protein sequence ID" value="CAB10371.1"/>
    <property type="status" value="ALT_SEQ"/>
    <property type="molecule type" value="Genomic_DNA"/>
</dbReference>
<dbReference type="EMBL" id="AL161542">
    <property type="protein sequence ID" value="CAB78634.1"/>
    <property type="status" value="ALT_SEQ"/>
    <property type="molecule type" value="Genomic_DNA"/>
</dbReference>
<dbReference type="EMBL" id="CP002687">
    <property type="protein sequence ID" value="AEE83666.1"/>
    <property type="molecule type" value="Genomic_DNA"/>
</dbReference>
<dbReference type="EMBL" id="BT002983">
    <property type="protein sequence ID" value="AAO22792.1"/>
    <property type="molecule type" value="mRNA"/>
</dbReference>
<dbReference type="PIR" id="A71425">
    <property type="entry name" value="A71425"/>
</dbReference>
<dbReference type="RefSeq" id="NP_193327.5">
    <property type="nucleotide sequence ID" value="NM_117684.6"/>
</dbReference>
<dbReference type="SMR" id="Q84WN3"/>
<dbReference type="BioGRID" id="12568">
    <property type="interactions" value="13"/>
</dbReference>
<dbReference type="FunCoup" id="Q84WN3">
    <property type="interactions" value="460"/>
</dbReference>
<dbReference type="STRING" id="3702.Q84WN3"/>
<dbReference type="GlyGen" id="Q84WN3">
    <property type="glycosylation" value="1 site"/>
</dbReference>
<dbReference type="PaxDb" id="3702-AT4G15920.1"/>
<dbReference type="ProteomicsDB" id="226803"/>
<dbReference type="GeneID" id="827274"/>
<dbReference type="KEGG" id="ath:AT4G15920"/>
<dbReference type="Araport" id="AT4G15920"/>
<dbReference type="TAIR" id="AT4G15920"/>
<dbReference type="eggNOG" id="KOG1623">
    <property type="taxonomic scope" value="Eukaryota"/>
</dbReference>
<dbReference type="HOGENOM" id="CLU_048643_1_0_1"/>
<dbReference type="InParanoid" id="Q84WN3"/>
<dbReference type="PhylomeDB" id="Q84WN3"/>
<dbReference type="PRO" id="PR:Q84WN3"/>
<dbReference type="Proteomes" id="UP000006548">
    <property type="component" value="Chromosome 4"/>
</dbReference>
<dbReference type="ExpressionAtlas" id="Q84WN3">
    <property type="expression patterns" value="baseline and differential"/>
</dbReference>
<dbReference type="GO" id="GO:0016020">
    <property type="term" value="C:membrane"/>
    <property type="evidence" value="ECO:0000318"/>
    <property type="project" value="GO_Central"/>
</dbReference>
<dbReference type="GO" id="GO:0009705">
    <property type="term" value="C:plant-type vacuole membrane"/>
    <property type="evidence" value="ECO:0000314"/>
    <property type="project" value="UniProtKB"/>
</dbReference>
<dbReference type="GO" id="GO:0005353">
    <property type="term" value="F:fructose transmembrane transporter activity"/>
    <property type="evidence" value="ECO:0000315"/>
    <property type="project" value="UniProtKB"/>
</dbReference>
<dbReference type="GO" id="GO:0051119">
    <property type="term" value="F:sugar transmembrane transporter activity"/>
    <property type="evidence" value="ECO:0000250"/>
    <property type="project" value="UniProtKB"/>
</dbReference>
<dbReference type="GO" id="GO:0008643">
    <property type="term" value="P:carbohydrate transport"/>
    <property type="evidence" value="ECO:0000318"/>
    <property type="project" value="GO_Central"/>
</dbReference>
<dbReference type="GO" id="GO:0070417">
    <property type="term" value="P:cellular response to cold"/>
    <property type="evidence" value="ECO:0000270"/>
    <property type="project" value="UniProtKB"/>
</dbReference>
<dbReference type="GO" id="GO:0006995">
    <property type="term" value="P:cellular response to nitrogen starvation"/>
    <property type="evidence" value="ECO:0000270"/>
    <property type="project" value="UniProtKB"/>
</dbReference>
<dbReference type="GO" id="GO:0007623">
    <property type="term" value="P:circadian rhythm"/>
    <property type="evidence" value="ECO:0000270"/>
    <property type="project" value="UniProtKB"/>
</dbReference>
<dbReference type="GO" id="GO:1902334">
    <property type="term" value="P:fructose export from vacuole to cytoplasm"/>
    <property type="evidence" value="ECO:0000315"/>
    <property type="project" value="UniProtKB"/>
</dbReference>
<dbReference type="GO" id="GO:0015755">
    <property type="term" value="P:fructose transmembrane transport"/>
    <property type="evidence" value="ECO:0000315"/>
    <property type="project" value="UniProtKB"/>
</dbReference>
<dbReference type="GO" id="GO:0051260">
    <property type="term" value="P:protein homooligomerization"/>
    <property type="evidence" value="ECO:0000314"/>
    <property type="project" value="UniProtKB"/>
</dbReference>
<dbReference type="GO" id="GO:0009646">
    <property type="term" value="P:response to absence of light"/>
    <property type="evidence" value="ECO:0000270"/>
    <property type="project" value="UniProtKB"/>
</dbReference>
<dbReference type="GO" id="GO:0009750">
    <property type="term" value="P:response to fructose"/>
    <property type="evidence" value="ECO:0000270"/>
    <property type="project" value="UniProtKB"/>
</dbReference>
<dbReference type="FunFam" id="1.20.1280.290:FF:000001">
    <property type="entry name" value="Bidirectional sugar transporter SWEET"/>
    <property type="match status" value="1"/>
</dbReference>
<dbReference type="FunFam" id="1.20.1280.290:FF:000002">
    <property type="entry name" value="Bidirectional sugar transporter SWEET"/>
    <property type="match status" value="1"/>
</dbReference>
<dbReference type="Gene3D" id="1.20.1280.290">
    <property type="match status" value="2"/>
</dbReference>
<dbReference type="InterPro" id="IPR047664">
    <property type="entry name" value="SWEET"/>
</dbReference>
<dbReference type="InterPro" id="IPR004316">
    <property type="entry name" value="SWEET_rpt"/>
</dbReference>
<dbReference type="PANTHER" id="PTHR10791:SF120">
    <property type="entry name" value="BIDIRECTIONAL SUGAR TRANSPORTER SWEET17"/>
    <property type="match status" value="1"/>
</dbReference>
<dbReference type="PANTHER" id="PTHR10791">
    <property type="entry name" value="RAG1-ACTIVATING PROTEIN 1"/>
    <property type="match status" value="1"/>
</dbReference>
<dbReference type="Pfam" id="PF03083">
    <property type="entry name" value="MtN3_slv"/>
    <property type="match status" value="2"/>
</dbReference>
<feature type="chain" id="PRO_0000404117" description="Bidirectional sugar transporter SWEET17">
    <location>
        <begin position="1"/>
        <end position="241"/>
    </location>
</feature>
<feature type="topological domain" description="Vacuolar" evidence="9">
    <location>
        <begin position="1"/>
        <end position="3"/>
    </location>
</feature>
<feature type="transmembrane region" description="Helical; Name=1" evidence="2">
    <location>
        <begin position="4"/>
        <end position="24"/>
    </location>
</feature>
<feature type="topological domain" description="Cytoplasmic" evidence="9">
    <location>
        <begin position="25"/>
        <end position="41"/>
    </location>
</feature>
<feature type="transmembrane region" description="Helical; Name=2" evidence="2">
    <location>
        <begin position="42"/>
        <end position="62"/>
    </location>
</feature>
<feature type="topological domain" description="Vacuolar" evidence="9">
    <location>
        <begin position="63"/>
        <end position="69"/>
    </location>
</feature>
<feature type="transmembrane region" description="Helical; Name=3" evidence="2">
    <location>
        <begin position="70"/>
        <end position="90"/>
    </location>
</feature>
<feature type="topological domain" description="Cytoplasmic" evidence="9">
    <location>
        <begin position="91"/>
        <end position="94"/>
    </location>
</feature>
<feature type="transmembrane region" description="Helical; Name=4" evidence="2">
    <location>
        <begin position="95"/>
        <end position="115"/>
    </location>
</feature>
<feature type="topological domain" description="Vacuolar" evidence="9">
    <location>
        <begin position="116"/>
        <end position="128"/>
    </location>
</feature>
<feature type="transmembrane region" description="Helical; Name=5" evidence="2">
    <location>
        <begin position="129"/>
        <end position="149"/>
    </location>
</feature>
<feature type="topological domain" description="Cytoplasmic" evidence="9">
    <location>
        <begin position="150"/>
        <end position="161"/>
    </location>
</feature>
<feature type="transmembrane region" description="Helical; Name=6" evidence="2">
    <location>
        <begin position="162"/>
        <end position="182"/>
    </location>
</feature>
<feature type="topological domain" description="Vacuolar" evidence="9">
    <location>
        <begin position="183"/>
        <end position="185"/>
    </location>
</feature>
<feature type="transmembrane region" description="Helical; Name=7" evidence="2">
    <location>
        <begin position="186"/>
        <end position="206"/>
    </location>
</feature>
<feature type="topological domain" description="Cytoplasmic" evidence="9">
    <location>
        <begin position="207"/>
        <end position="241"/>
    </location>
</feature>
<feature type="domain" description="MtN3/slv 1">
    <location>
        <begin position="6"/>
        <end position="92"/>
    </location>
</feature>
<feature type="domain" description="MtN3/slv 2">
    <location>
        <begin position="129"/>
        <end position="212"/>
    </location>
</feature>
<feature type="sequence conflict" description="In Ref. 4; AAO22792." evidence="9" ref="4">
    <original>DVD</original>
    <variation>VVV</variation>
    <location>
        <begin position="99"/>
        <end position="101"/>
    </location>
</feature>
<feature type="sequence conflict" description="In Ref. 3; AEE83666." evidence="9" ref="3">
    <original>D</original>
    <variation>E</variation>
    <location>
        <position position="101"/>
    </location>
</feature>
<keyword id="KW-0472">Membrane</keyword>
<keyword id="KW-1185">Reference proteome</keyword>
<keyword id="KW-0677">Repeat</keyword>
<keyword id="KW-0762">Sugar transport</keyword>
<keyword id="KW-0812">Transmembrane</keyword>
<keyword id="KW-1133">Transmembrane helix</keyword>
<keyword id="KW-0813">Transport</keyword>
<keyword id="KW-0926">Vacuole</keyword>
<proteinExistence type="evidence at protein level"/>
<gene>
    <name evidence="7" type="primary">SWEET17</name>
    <name evidence="10" type="ordered locus">At4g15920</name>
    <name evidence="11" type="ORF">dl4000c</name>
    <name evidence="12" type="ORF">FCAALL.237</name>
</gene>
<protein>
    <recommendedName>
        <fullName evidence="7">Bidirectional sugar transporter SWEET17</fullName>
        <shortName evidence="7">AtSWEET17</shortName>
    </recommendedName>
    <alternativeName>
        <fullName evidence="7">Protein SUGARS WILL EVENTUALLY BE EXPORTED TRANSPORTERS 17</fullName>
    </alternativeName>
</protein>
<sequence>MAEASFYIGVIGNVISVLVFLSPVETFWKIVKRRSTEEYKSLPYICTLLGSSLWTYYGIVTPGEYLVSTVNGFGALVETIYVSLFLFYAPRHLKLKTVDVDAMLNVFFPIAAIVATRSAFEDEKMRSQSIGFISAGLNIIMYGSPLSAMKTVVTTKSVKYMPFWLSFFLFLNGAIWAVYALLQHDVFLLVPNGVGFVFGTMQLILYGIYRNAKPVGLSNGLSEIAQDEEEGLTSRVEPLLS</sequence>
<accession>Q84WN3</accession>
<accession>F4JKX8</accession>
<accession>O23441</accession>